<name>AROC_CERS1</name>
<accession>A3PFR1</accession>
<comment type="function">
    <text evidence="1">Catalyzes the anti-1,4-elimination of the C-3 phosphate and the C-6 proR hydrogen from 5-enolpyruvylshikimate-3-phosphate (EPSP) to yield chorismate, which is the branch point compound that serves as the starting substrate for the three terminal pathways of aromatic amino acid biosynthesis. This reaction introduces a second double bond into the aromatic ring system.</text>
</comment>
<comment type="catalytic activity">
    <reaction evidence="1">
        <text>5-O-(1-carboxyvinyl)-3-phosphoshikimate = chorismate + phosphate</text>
        <dbReference type="Rhea" id="RHEA:21020"/>
        <dbReference type="ChEBI" id="CHEBI:29748"/>
        <dbReference type="ChEBI" id="CHEBI:43474"/>
        <dbReference type="ChEBI" id="CHEBI:57701"/>
        <dbReference type="EC" id="4.2.3.5"/>
    </reaction>
</comment>
<comment type="cofactor">
    <cofactor evidence="1">
        <name>FMNH2</name>
        <dbReference type="ChEBI" id="CHEBI:57618"/>
    </cofactor>
    <text evidence="1">Reduced FMN (FMNH(2)).</text>
</comment>
<comment type="pathway">
    <text evidence="1">Metabolic intermediate biosynthesis; chorismate biosynthesis; chorismate from D-erythrose 4-phosphate and phosphoenolpyruvate: step 7/7.</text>
</comment>
<comment type="subunit">
    <text evidence="1">Homotetramer.</text>
</comment>
<comment type="similarity">
    <text evidence="1">Belongs to the chorismate synthase family.</text>
</comment>
<feature type="chain" id="PRO_1000022540" description="Chorismate synthase">
    <location>
        <begin position="1"/>
        <end position="366"/>
    </location>
</feature>
<feature type="binding site" evidence="1">
    <location>
        <position position="48"/>
    </location>
    <ligand>
        <name>NADP(+)</name>
        <dbReference type="ChEBI" id="CHEBI:58349"/>
    </ligand>
</feature>
<feature type="binding site" evidence="1">
    <location>
        <position position="54"/>
    </location>
    <ligand>
        <name>NADP(+)</name>
        <dbReference type="ChEBI" id="CHEBI:58349"/>
    </ligand>
</feature>
<feature type="binding site" evidence="1">
    <location>
        <begin position="125"/>
        <end position="127"/>
    </location>
    <ligand>
        <name>FMN</name>
        <dbReference type="ChEBI" id="CHEBI:58210"/>
    </ligand>
</feature>
<feature type="binding site" evidence="1">
    <location>
        <begin position="241"/>
        <end position="242"/>
    </location>
    <ligand>
        <name>FMN</name>
        <dbReference type="ChEBI" id="CHEBI:58210"/>
    </ligand>
</feature>
<feature type="binding site" evidence="1">
    <location>
        <position position="285"/>
    </location>
    <ligand>
        <name>FMN</name>
        <dbReference type="ChEBI" id="CHEBI:58210"/>
    </ligand>
</feature>
<feature type="binding site" evidence="1">
    <location>
        <begin position="300"/>
        <end position="304"/>
    </location>
    <ligand>
        <name>FMN</name>
        <dbReference type="ChEBI" id="CHEBI:58210"/>
    </ligand>
</feature>
<feature type="binding site" evidence="1">
    <location>
        <position position="326"/>
    </location>
    <ligand>
        <name>FMN</name>
        <dbReference type="ChEBI" id="CHEBI:58210"/>
    </ligand>
</feature>
<keyword id="KW-0028">Amino-acid biosynthesis</keyword>
<keyword id="KW-0057">Aromatic amino acid biosynthesis</keyword>
<keyword id="KW-0274">FAD</keyword>
<keyword id="KW-0285">Flavoprotein</keyword>
<keyword id="KW-0288">FMN</keyword>
<keyword id="KW-0456">Lyase</keyword>
<keyword id="KW-0521">NADP</keyword>
<evidence type="ECO:0000255" key="1">
    <source>
        <dbReference type="HAMAP-Rule" id="MF_00300"/>
    </source>
</evidence>
<protein>
    <recommendedName>
        <fullName evidence="1">Chorismate synthase</fullName>
        <shortName evidence="1">CS</shortName>
        <ecNumber evidence="1">4.2.3.5</ecNumber>
    </recommendedName>
    <alternativeName>
        <fullName evidence="1">5-enolpyruvylshikimate-3-phosphate phospholyase</fullName>
    </alternativeName>
</protein>
<organism>
    <name type="scientific">Cereibacter sphaeroides (strain ATCC 17029 / ATH 2.4.9)</name>
    <name type="common">Rhodobacter sphaeroides</name>
    <dbReference type="NCBI Taxonomy" id="349101"/>
    <lineage>
        <taxon>Bacteria</taxon>
        <taxon>Pseudomonadati</taxon>
        <taxon>Pseudomonadota</taxon>
        <taxon>Alphaproteobacteria</taxon>
        <taxon>Rhodobacterales</taxon>
        <taxon>Paracoccaceae</taxon>
        <taxon>Cereibacter</taxon>
    </lineage>
</organism>
<sequence>MSYNTFGHIFRVTTWGESHGPALGATVDGCPPGVAIEAEAIQHWLDRRKPGQNRFTTQRQEPDAVRILSGTFEGRSTGTPIQLMIENTDQRSKDYGEIARSFRPGHADIAYHWKYGLRDYRGGGRSSARETAARVAAGGVARAALAALVPGLRIEGYMVQIGPHAIDRARFDADEIERNPFWCPDSDTAALWADYLDGLRKAHDSVGAIVEVRASGVPAGLGAPIYGKLDSDLAAAMMTINAVKGVEIGEGMAAACLTGSANADEIRMGPEGPEFLTNHAGGILGGISTGQDVVVRFAVKPTSSILTPRRSVTTDGCEVEVVTKGRHDPCVGIRAVPVGEAMMACVLLDHLLLDRGQTGGLRGTIG</sequence>
<proteinExistence type="inferred from homology"/>
<dbReference type="EC" id="4.2.3.5" evidence="1"/>
<dbReference type="EMBL" id="CP000577">
    <property type="protein sequence ID" value="ABN75177.1"/>
    <property type="molecule type" value="Genomic_DNA"/>
</dbReference>
<dbReference type="RefSeq" id="WP_011840141.1">
    <property type="nucleotide sequence ID" value="NC_009049.1"/>
</dbReference>
<dbReference type="SMR" id="A3PFR1"/>
<dbReference type="KEGG" id="rsh:Rsph17029_0057"/>
<dbReference type="HOGENOM" id="CLU_034547_0_0_5"/>
<dbReference type="UniPathway" id="UPA00053">
    <property type="reaction ID" value="UER00090"/>
</dbReference>
<dbReference type="GO" id="GO:0005829">
    <property type="term" value="C:cytosol"/>
    <property type="evidence" value="ECO:0007669"/>
    <property type="project" value="TreeGrafter"/>
</dbReference>
<dbReference type="GO" id="GO:0004107">
    <property type="term" value="F:chorismate synthase activity"/>
    <property type="evidence" value="ECO:0007669"/>
    <property type="project" value="UniProtKB-UniRule"/>
</dbReference>
<dbReference type="GO" id="GO:0010181">
    <property type="term" value="F:FMN binding"/>
    <property type="evidence" value="ECO:0007669"/>
    <property type="project" value="TreeGrafter"/>
</dbReference>
<dbReference type="GO" id="GO:0008652">
    <property type="term" value="P:amino acid biosynthetic process"/>
    <property type="evidence" value="ECO:0007669"/>
    <property type="project" value="UniProtKB-KW"/>
</dbReference>
<dbReference type="GO" id="GO:0009073">
    <property type="term" value="P:aromatic amino acid family biosynthetic process"/>
    <property type="evidence" value="ECO:0007669"/>
    <property type="project" value="UniProtKB-KW"/>
</dbReference>
<dbReference type="GO" id="GO:0009423">
    <property type="term" value="P:chorismate biosynthetic process"/>
    <property type="evidence" value="ECO:0007669"/>
    <property type="project" value="UniProtKB-UniRule"/>
</dbReference>
<dbReference type="CDD" id="cd07304">
    <property type="entry name" value="Chorismate_synthase"/>
    <property type="match status" value="1"/>
</dbReference>
<dbReference type="Gene3D" id="3.60.150.10">
    <property type="entry name" value="Chorismate synthase AroC"/>
    <property type="match status" value="1"/>
</dbReference>
<dbReference type="HAMAP" id="MF_00300">
    <property type="entry name" value="Chorismate_synth"/>
    <property type="match status" value="1"/>
</dbReference>
<dbReference type="InterPro" id="IPR000453">
    <property type="entry name" value="Chorismate_synth"/>
</dbReference>
<dbReference type="InterPro" id="IPR035904">
    <property type="entry name" value="Chorismate_synth_AroC_sf"/>
</dbReference>
<dbReference type="InterPro" id="IPR020541">
    <property type="entry name" value="Chorismate_synthase_CS"/>
</dbReference>
<dbReference type="NCBIfam" id="TIGR00033">
    <property type="entry name" value="aroC"/>
    <property type="match status" value="1"/>
</dbReference>
<dbReference type="NCBIfam" id="NF003793">
    <property type="entry name" value="PRK05382.1"/>
    <property type="match status" value="1"/>
</dbReference>
<dbReference type="PANTHER" id="PTHR21085">
    <property type="entry name" value="CHORISMATE SYNTHASE"/>
    <property type="match status" value="1"/>
</dbReference>
<dbReference type="PANTHER" id="PTHR21085:SF0">
    <property type="entry name" value="CHORISMATE SYNTHASE"/>
    <property type="match status" value="1"/>
</dbReference>
<dbReference type="Pfam" id="PF01264">
    <property type="entry name" value="Chorismate_synt"/>
    <property type="match status" value="1"/>
</dbReference>
<dbReference type="PIRSF" id="PIRSF001456">
    <property type="entry name" value="Chorismate_synth"/>
    <property type="match status" value="1"/>
</dbReference>
<dbReference type="SUPFAM" id="SSF103263">
    <property type="entry name" value="Chorismate synthase, AroC"/>
    <property type="match status" value="1"/>
</dbReference>
<dbReference type="PROSITE" id="PS00787">
    <property type="entry name" value="CHORISMATE_SYNTHASE_1"/>
    <property type="match status" value="1"/>
</dbReference>
<dbReference type="PROSITE" id="PS00789">
    <property type="entry name" value="CHORISMATE_SYNTHASE_3"/>
    <property type="match status" value="1"/>
</dbReference>
<reference key="1">
    <citation type="submission" date="2007-02" db="EMBL/GenBank/DDBJ databases">
        <title>Complete sequence of chromosome 1 of Rhodobacter sphaeroides ATCC 17029.</title>
        <authorList>
            <person name="Copeland A."/>
            <person name="Lucas S."/>
            <person name="Lapidus A."/>
            <person name="Barry K."/>
            <person name="Detter J.C."/>
            <person name="Glavina del Rio T."/>
            <person name="Hammon N."/>
            <person name="Israni S."/>
            <person name="Dalin E."/>
            <person name="Tice H."/>
            <person name="Pitluck S."/>
            <person name="Kiss H."/>
            <person name="Brettin T."/>
            <person name="Bruce D."/>
            <person name="Han C."/>
            <person name="Tapia R."/>
            <person name="Gilna P."/>
            <person name="Schmutz J."/>
            <person name="Larimer F."/>
            <person name="Land M."/>
            <person name="Hauser L."/>
            <person name="Kyrpides N."/>
            <person name="Mikhailova N."/>
            <person name="Richardson P."/>
            <person name="Mackenzie C."/>
            <person name="Choudhary M."/>
            <person name="Donohue T.J."/>
            <person name="Kaplan S."/>
        </authorList>
    </citation>
    <scope>NUCLEOTIDE SEQUENCE [LARGE SCALE GENOMIC DNA]</scope>
    <source>
        <strain>ATCC 17029 / ATH 2.4.9</strain>
    </source>
</reference>
<gene>
    <name evidence="1" type="primary">aroC</name>
    <name type="ordered locus">Rsph17029_0057</name>
</gene>